<reference key="1">
    <citation type="journal article" date="2018" name="Proc. Natl. Acad. Sci. U.S.A.">
        <title>Genetically encodable bioluminescent system from fungi.</title>
        <authorList>
            <person name="Kotlobay A.A."/>
            <person name="Sarkisyan K.S."/>
            <person name="Mokrushina Y.A."/>
            <person name="Marcet-Houben M."/>
            <person name="Serebrovskaya E.O."/>
            <person name="Markina N.M."/>
            <person name="Gonzalez Somermeyer L."/>
            <person name="Gorokhovatsky A.Y."/>
            <person name="Vvedensky A."/>
            <person name="Purtov K.V."/>
            <person name="Petushkov V.N."/>
            <person name="Rodionova N.S."/>
            <person name="Chepurnyh T.V."/>
            <person name="Fakhranurova L.I."/>
            <person name="Guglya E.B."/>
            <person name="Ziganshin R."/>
            <person name="Tsarkova A.S."/>
            <person name="Kaskova Z.M."/>
            <person name="Shender V."/>
            <person name="Abakumov M."/>
            <person name="Abakumova T.O."/>
            <person name="Povolotskaya I.S."/>
            <person name="Eroshkin F.M."/>
            <person name="Zaraisky A.G."/>
            <person name="Mishin A.S."/>
            <person name="Dolgov S.V."/>
            <person name="Mitiouchkina T.Y."/>
            <person name="Kopantzev E.P."/>
            <person name="Waldenmaier H.E."/>
            <person name="Oliveira A.G."/>
            <person name="Oba Y."/>
            <person name="Barsova E."/>
            <person name="Bogdanova E.A."/>
            <person name="Gabaldon T."/>
            <person name="Stevani C.V."/>
            <person name="Lukyanov S."/>
            <person name="Smirnov I.V."/>
            <person name="Gitelson J.I."/>
            <person name="Kondrashov F.A."/>
            <person name="Yampolsky I.V."/>
        </authorList>
    </citation>
    <scope>NUCLEOTIDE SEQUENCE [MRNA]</scope>
    <scope>IDENTIFICATION</scope>
    <scope>FUNCTION</scope>
    <scope>PATHWAY</scope>
    <scope>BIOTECHNOLOGY</scope>
</reference>
<reference key="2">
    <citation type="journal article" date="2017" name="Sci. Adv.">
        <title>Mechanism and color modulation of fungal bioluminescence.</title>
        <authorList>
            <person name="Kaskova Z.M."/>
            <person name="Doerr F.A."/>
            <person name="Petushkov V.N."/>
            <person name="Purtov K.V."/>
            <person name="Tsarkova A.S."/>
            <person name="Rodionova N.S."/>
            <person name="Mineev K.S."/>
            <person name="Guglya E.B."/>
            <person name="Kotlobay A."/>
            <person name="Baleeva N.S."/>
            <person name="Baranov M.S."/>
            <person name="Arseniev A.S."/>
            <person name="Gitelson J.I."/>
            <person name="Lukyanov S."/>
            <person name="Suzuki Y."/>
            <person name="Kanie S."/>
            <person name="Pinto E."/>
            <person name="Di Mascio P."/>
            <person name="Waldenmaier H.E."/>
            <person name="Pereira T.A."/>
            <person name="Carvalho R.P."/>
            <person name="Oliveira A.G."/>
            <person name="Oba Y."/>
            <person name="Bastos E.L."/>
            <person name="Stevani C.V."/>
            <person name="Yampolsky I.V."/>
        </authorList>
    </citation>
    <scope>FUNCTION</scope>
    <scope>CATALYTIC ACTIVITY</scope>
</reference>
<feature type="chain" id="PRO_0000455705" description="Caffeoylpyruvate hydrolase">
    <location>
        <begin position="1"/>
        <end position="289"/>
    </location>
</feature>
<feature type="binding site" evidence="1">
    <location>
        <position position="140"/>
    </location>
    <ligand>
        <name>a divalent metal cation</name>
        <dbReference type="ChEBI" id="CHEBI:60240"/>
    </ligand>
</feature>
<feature type="binding site" evidence="1">
    <location>
        <position position="142"/>
    </location>
    <ligand>
        <name>a divalent metal cation</name>
        <dbReference type="ChEBI" id="CHEBI:60240"/>
    </ligand>
</feature>
<feature type="binding site" evidence="1">
    <location>
        <position position="171"/>
    </location>
    <ligand>
        <name>a divalent metal cation</name>
        <dbReference type="ChEBI" id="CHEBI:60240"/>
    </ligand>
</feature>
<gene>
    <name evidence="4" type="primary">cph</name>
</gene>
<proteinExistence type="evidence at protein level"/>
<organism>
    <name type="scientific">Neonothopanus nambi</name>
    <name type="common">Agaricus nambi</name>
    <dbReference type="NCBI Taxonomy" id="71958"/>
    <lineage>
        <taxon>Eukaryota</taxon>
        <taxon>Fungi</taxon>
        <taxon>Dikarya</taxon>
        <taxon>Basidiomycota</taxon>
        <taxon>Agaricomycotina</taxon>
        <taxon>Agaricomycetes</taxon>
        <taxon>Agaricomycetidae</taxon>
        <taxon>Agaricales</taxon>
        <taxon>Marasmiineae</taxon>
        <taxon>Omphalotaceae</taxon>
        <taxon>Neonothopanus</taxon>
    </lineage>
</organism>
<dbReference type="EC" id="3.7.-.-" evidence="2"/>
<dbReference type="EMBL" id="LC435389">
    <property type="protein sequence ID" value="BBH43519.1"/>
    <property type="molecule type" value="mRNA"/>
</dbReference>
<dbReference type="SMR" id="A0A3G9JYJ6"/>
<dbReference type="GO" id="GO:0018773">
    <property type="term" value="F:acetylpyruvate hydrolase activity"/>
    <property type="evidence" value="ECO:0007669"/>
    <property type="project" value="TreeGrafter"/>
</dbReference>
<dbReference type="GO" id="GO:0046872">
    <property type="term" value="F:metal ion binding"/>
    <property type="evidence" value="ECO:0007669"/>
    <property type="project" value="UniProtKB-KW"/>
</dbReference>
<dbReference type="Gene3D" id="3.90.850.10">
    <property type="entry name" value="Fumarylacetoacetase-like, C-terminal domain"/>
    <property type="match status" value="1"/>
</dbReference>
<dbReference type="InterPro" id="IPR011234">
    <property type="entry name" value="Fumarylacetoacetase-like_C"/>
</dbReference>
<dbReference type="InterPro" id="IPR036663">
    <property type="entry name" value="Fumarylacetoacetase_C_sf"/>
</dbReference>
<dbReference type="PANTHER" id="PTHR11820">
    <property type="entry name" value="ACYLPYRUVASE"/>
    <property type="match status" value="1"/>
</dbReference>
<dbReference type="PANTHER" id="PTHR11820:SF7">
    <property type="entry name" value="ACYLPYRUVASE FAHD1, MITOCHONDRIAL"/>
    <property type="match status" value="1"/>
</dbReference>
<dbReference type="Pfam" id="PF01557">
    <property type="entry name" value="FAA_hydrolase"/>
    <property type="match status" value="1"/>
</dbReference>
<dbReference type="SUPFAM" id="SSF56529">
    <property type="entry name" value="FAH"/>
    <property type="match status" value="1"/>
</dbReference>
<comment type="function">
    <text evidence="2 3 6">Caffeoylpyruvate hydrolase; part of the gene cluster that mediates the fungal bioluminescence cycle (PubMed:28508049, PubMed:30478037). Involved in the recycling of oxyluciferin, a pyruvic acid adduct of caffeic acid, to caffeic acid (PubMed:28508049, PubMed:30478037). The fungal bioluminescence cycle begins with the hispidin synthetase that catalyzes the formation of hispidin which is further hydroxylated by the hispidin-3-hydroxylase, yielding the fungal luciferin 3-hydroxyhispidin. The luciferase then produces an endoperoxide as a high-energy intermediate with decomposition that yields oxyluciferin (also known as caffeoylpyruvate) and light emission. Oxyluciferin can be recycled to caffeic acid by caffeoylpyruvate hydrolase (Probable) (PubMed:30478037).</text>
</comment>
<comment type="catalytic activity">
    <reaction evidence="2">
        <text>(E)-caffeoylpyruvate + H2O = (E)-caffeate + pyruvate + H(+)</text>
        <dbReference type="Rhea" id="RHEA:71155"/>
        <dbReference type="ChEBI" id="CHEBI:15361"/>
        <dbReference type="ChEBI" id="CHEBI:15377"/>
        <dbReference type="ChEBI" id="CHEBI:15378"/>
        <dbReference type="ChEBI" id="CHEBI:57770"/>
        <dbReference type="ChEBI" id="CHEBI:190290"/>
    </reaction>
    <physiologicalReaction direction="left-to-right" evidence="2">
        <dbReference type="Rhea" id="RHEA:71156"/>
    </physiologicalReaction>
</comment>
<comment type="cofactor">
    <cofactor evidence="1">
        <name>Mg(2+)</name>
        <dbReference type="ChEBI" id="CHEBI:18420"/>
    </cofactor>
    <cofactor evidence="1">
        <name>Mn(2+)</name>
        <dbReference type="ChEBI" id="CHEBI:29035"/>
    </cofactor>
</comment>
<comment type="pathway">
    <text evidence="3">Secondary metabolite biosynthesis.</text>
</comment>
<comment type="subunit">
    <text evidence="1">Homodimer.</text>
</comment>
<comment type="biotechnology">
    <text evidence="3">The availability of a complete eukaryotic luciferin biosynthesis pathway provides several applications in biomedicine and bioengineering.</text>
</comment>
<comment type="similarity">
    <text evidence="5">Belongs to the FAH family.</text>
</comment>
<protein>
    <recommendedName>
        <fullName evidence="4">Caffeoylpyruvate hydrolase</fullName>
        <shortName evidence="4">CPH</shortName>
        <ecNumber evidence="2">3.7.-.-</ecNumber>
    </recommendedName>
    <alternativeName>
        <fullName evidence="4">Fungal bioluminescence cycle protein cph</fullName>
    </alternativeName>
</protein>
<name>CPH_NEONM</name>
<keyword id="KW-0378">Hydrolase</keyword>
<keyword id="KW-0460">Magnesium</keyword>
<keyword id="KW-0479">Metal-binding</keyword>
<evidence type="ECO:0000250" key="1">
    <source>
        <dbReference type="UniProtKB" id="Q6P587"/>
    </source>
</evidence>
<evidence type="ECO:0000269" key="2">
    <source>
    </source>
</evidence>
<evidence type="ECO:0000269" key="3">
    <source>
    </source>
</evidence>
<evidence type="ECO:0000303" key="4">
    <source>
    </source>
</evidence>
<evidence type="ECO:0000305" key="5"/>
<evidence type="ECO:0000305" key="6">
    <source>
    </source>
</evidence>
<sequence>MAPISSTWSRLIRFVAIETSLVHIGEPIDATMDVGLARREGKTIQAYEIIGSGSALDLSAQVSKNVLTVRELLMPLSREEIKTVRCLGLNYPVHATEANVAVPKFPNLFYKPVTSLIGPDGLITIPSVVQPPKEHQSDYEAELVIVIGKAAKNVSEDEALDYVLGYTAANDISFRKHQLAVSQWSFSKGFGSLLLTIRMAQTHSGNINRFSRDQIFNVKKTISFLSQGTTLEPGSIILTGTPDGVGFVRNPPLYLKDGDEVMTWIGSGIGTLANTVQEEKTCFASGGHE</sequence>
<accession>A0A3G9JYJ6</accession>